<comment type="function">
    <text evidence="1">Reversibly transfers an adenylyl group from ATP to 4'-phosphopantetheine, yielding dephospho-CoA (dPCoA) and pyrophosphate.</text>
</comment>
<comment type="catalytic activity">
    <reaction evidence="1">
        <text>(R)-4'-phosphopantetheine + ATP + H(+) = 3'-dephospho-CoA + diphosphate</text>
        <dbReference type="Rhea" id="RHEA:19801"/>
        <dbReference type="ChEBI" id="CHEBI:15378"/>
        <dbReference type="ChEBI" id="CHEBI:30616"/>
        <dbReference type="ChEBI" id="CHEBI:33019"/>
        <dbReference type="ChEBI" id="CHEBI:57328"/>
        <dbReference type="ChEBI" id="CHEBI:61723"/>
        <dbReference type="EC" id="2.7.7.3"/>
    </reaction>
</comment>
<comment type="cofactor">
    <cofactor evidence="1">
        <name>Mg(2+)</name>
        <dbReference type="ChEBI" id="CHEBI:18420"/>
    </cofactor>
</comment>
<comment type="pathway">
    <text evidence="1">Cofactor biosynthesis; coenzyme A biosynthesis; CoA from (R)-pantothenate: step 4/5.</text>
</comment>
<comment type="subunit">
    <text evidence="1">Homohexamer.</text>
</comment>
<comment type="subcellular location">
    <subcellularLocation>
        <location evidence="1">Cytoplasm</location>
    </subcellularLocation>
</comment>
<comment type="similarity">
    <text evidence="1">Belongs to the bacterial CoaD family.</text>
</comment>
<sequence length="159" mass="17508">MTIAVCPGSFDPVTNGHIDVITRCCRLFDEVHVVVAVNAMKKPLFTETERVDIIKHALADSGMTNYVVAWTDGLITDYCRKVDSPVIVKGLRQNGDYEAELGMALVNRHLAYVETMFLPANPVLEHISSSVVKDVARHGGDITGMVPDYVVPLLEKALR</sequence>
<reference key="1">
    <citation type="journal article" date="2009" name="J. Bacteriol.">
        <title>Genome sequence of the probiotic bacterium Bifidobacterium animalis subsp. lactis AD011.</title>
        <authorList>
            <person name="Kim J.F."/>
            <person name="Jeong H."/>
            <person name="Yu D.S."/>
            <person name="Choi S.-H."/>
            <person name="Hur C.-G."/>
            <person name="Park M.-S."/>
            <person name="Yoon S.H."/>
            <person name="Kim D.-W."/>
            <person name="Ji G.E."/>
            <person name="Park H.-S."/>
            <person name="Oh T.K."/>
        </authorList>
    </citation>
    <scope>NUCLEOTIDE SEQUENCE [LARGE SCALE GENOMIC DNA]</scope>
    <source>
        <strain>AD011</strain>
    </source>
</reference>
<feature type="chain" id="PRO_1000123264" description="Phosphopantetheine adenylyltransferase">
    <location>
        <begin position="1"/>
        <end position="159"/>
    </location>
</feature>
<feature type="binding site" evidence="1">
    <location>
        <begin position="9"/>
        <end position="10"/>
    </location>
    <ligand>
        <name>ATP</name>
        <dbReference type="ChEBI" id="CHEBI:30616"/>
    </ligand>
</feature>
<feature type="binding site" evidence="1">
    <location>
        <position position="9"/>
    </location>
    <ligand>
        <name>substrate</name>
    </ligand>
</feature>
<feature type="binding site" evidence="1">
    <location>
        <position position="17"/>
    </location>
    <ligand>
        <name>ATP</name>
        <dbReference type="ChEBI" id="CHEBI:30616"/>
    </ligand>
</feature>
<feature type="binding site" evidence="1">
    <location>
        <position position="41"/>
    </location>
    <ligand>
        <name>substrate</name>
    </ligand>
</feature>
<feature type="binding site" evidence="1">
    <location>
        <position position="75"/>
    </location>
    <ligand>
        <name>substrate</name>
    </ligand>
</feature>
<feature type="binding site" evidence="1">
    <location>
        <position position="89"/>
    </location>
    <ligand>
        <name>substrate</name>
    </ligand>
</feature>
<feature type="binding site" evidence="1">
    <location>
        <begin position="90"/>
        <end position="92"/>
    </location>
    <ligand>
        <name>ATP</name>
        <dbReference type="ChEBI" id="CHEBI:30616"/>
    </ligand>
</feature>
<feature type="binding site" evidence="1">
    <location>
        <position position="100"/>
    </location>
    <ligand>
        <name>ATP</name>
        <dbReference type="ChEBI" id="CHEBI:30616"/>
    </ligand>
</feature>
<feature type="binding site" evidence="1">
    <location>
        <begin position="124"/>
        <end position="130"/>
    </location>
    <ligand>
        <name>ATP</name>
        <dbReference type="ChEBI" id="CHEBI:30616"/>
    </ligand>
</feature>
<feature type="site" description="Transition state stabilizer" evidence="1">
    <location>
        <position position="17"/>
    </location>
</feature>
<organism>
    <name type="scientific">Bifidobacterium animalis subsp. lactis (strain AD011)</name>
    <dbReference type="NCBI Taxonomy" id="442563"/>
    <lineage>
        <taxon>Bacteria</taxon>
        <taxon>Bacillati</taxon>
        <taxon>Actinomycetota</taxon>
        <taxon>Actinomycetes</taxon>
        <taxon>Bifidobacteriales</taxon>
        <taxon>Bifidobacteriaceae</taxon>
        <taxon>Bifidobacterium</taxon>
    </lineage>
</organism>
<evidence type="ECO:0000255" key="1">
    <source>
        <dbReference type="HAMAP-Rule" id="MF_00151"/>
    </source>
</evidence>
<protein>
    <recommendedName>
        <fullName evidence="1">Phosphopantetheine adenylyltransferase</fullName>
        <ecNumber evidence="1">2.7.7.3</ecNumber>
    </recommendedName>
    <alternativeName>
        <fullName evidence="1">Dephospho-CoA pyrophosphorylase</fullName>
    </alternativeName>
    <alternativeName>
        <fullName evidence="1">Pantetheine-phosphate adenylyltransferase</fullName>
        <shortName evidence="1">PPAT</shortName>
    </alternativeName>
</protein>
<name>COAD_BIFA0</name>
<proteinExistence type="inferred from homology"/>
<gene>
    <name evidence="1" type="primary">coaD</name>
    <name type="ordered locus">BLA_0269</name>
</gene>
<keyword id="KW-0067">ATP-binding</keyword>
<keyword id="KW-0173">Coenzyme A biosynthesis</keyword>
<keyword id="KW-0963">Cytoplasm</keyword>
<keyword id="KW-0460">Magnesium</keyword>
<keyword id="KW-0547">Nucleotide-binding</keyword>
<keyword id="KW-0548">Nucleotidyltransferase</keyword>
<keyword id="KW-1185">Reference proteome</keyword>
<keyword id="KW-0808">Transferase</keyword>
<accession>B8DVS0</accession>
<dbReference type="EC" id="2.7.7.3" evidence="1"/>
<dbReference type="EMBL" id="CP001213">
    <property type="protein sequence ID" value="ACL28571.1"/>
    <property type="molecule type" value="Genomic_DNA"/>
</dbReference>
<dbReference type="RefSeq" id="WP_004268387.1">
    <property type="nucleotide sequence ID" value="NC_011835.1"/>
</dbReference>
<dbReference type="SMR" id="B8DVS0"/>
<dbReference type="STRING" id="442563.BLA_0269"/>
<dbReference type="GeneID" id="29695548"/>
<dbReference type="KEGG" id="bla:BLA_0269"/>
<dbReference type="HOGENOM" id="CLU_100149_1_1_11"/>
<dbReference type="UniPathway" id="UPA00241">
    <property type="reaction ID" value="UER00355"/>
</dbReference>
<dbReference type="Proteomes" id="UP000002456">
    <property type="component" value="Chromosome"/>
</dbReference>
<dbReference type="GO" id="GO:0005737">
    <property type="term" value="C:cytoplasm"/>
    <property type="evidence" value="ECO:0007669"/>
    <property type="project" value="UniProtKB-SubCell"/>
</dbReference>
<dbReference type="GO" id="GO:0005524">
    <property type="term" value="F:ATP binding"/>
    <property type="evidence" value="ECO:0007669"/>
    <property type="project" value="UniProtKB-KW"/>
</dbReference>
<dbReference type="GO" id="GO:0004595">
    <property type="term" value="F:pantetheine-phosphate adenylyltransferase activity"/>
    <property type="evidence" value="ECO:0007669"/>
    <property type="project" value="UniProtKB-UniRule"/>
</dbReference>
<dbReference type="GO" id="GO:0015937">
    <property type="term" value="P:coenzyme A biosynthetic process"/>
    <property type="evidence" value="ECO:0007669"/>
    <property type="project" value="UniProtKB-UniRule"/>
</dbReference>
<dbReference type="CDD" id="cd02163">
    <property type="entry name" value="PPAT"/>
    <property type="match status" value="1"/>
</dbReference>
<dbReference type="Gene3D" id="3.40.50.620">
    <property type="entry name" value="HUPs"/>
    <property type="match status" value="1"/>
</dbReference>
<dbReference type="HAMAP" id="MF_00151">
    <property type="entry name" value="PPAT_bact"/>
    <property type="match status" value="1"/>
</dbReference>
<dbReference type="InterPro" id="IPR004821">
    <property type="entry name" value="Cyt_trans-like"/>
</dbReference>
<dbReference type="InterPro" id="IPR001980">
    <property type="entry name" value="PPAT"/>
</dbReference>
<dbReference type="InterPro" id="IPR014729">
    <property type="entry name" value="Rossmann-like_a/b/a_fold"/>
</dbReference>
<dbReference type="NCBIfam" id="TIGR01510">
    <property type="entry name" value="coaD_prev_kdtB"/>
    <property type="match status" value="1"/>
</dbReference>
<dbReference type="NCBIfam" id="TIGR00125">
    <property type="entry name" value="cyt_tran_rel"/>
    <property type="match status" value="1"/>
</dbReference>
<dbReference type="PANTHER" id="PTHR21342">
    <property type="entry name" value="PHOSPHOPANTETHEINE ADENYLYLTRANSFERASE"/>
    <property type="match status" value="1"/>
</dbReference>
<dbReference type="PANTHER" id="PTHR21342:SF1">
    <property type="entry name" value="PHOSPHOPANTETHEINE ADENYLYLTRANSFERASE"/>
    <property type="match status" value="1"/>
</dbReference>
<dbReference type="Pfam" id="PF01467">
    <property type="entry name" value="CTP_transf_like"/>
    <property type="match status" value="1"/>
</dbReference>
<dbReference type="PRINTS" id="PR01020">
    <property type="entry name" value="LPSBIOSNTHSS"/>
</dbReference>
<dbReference type="SUPFAM" id="SSF52374">
    <property type="entry name" value="Nucleotidylyl transferase"/>
    <property type="match status" value="1"/>
</dbReference>